<gene>
    <name evidence="1" type="primary">metAA</name>
    <name type="ordered locus">Ddes_1078</name>
</gene>
<dbReference type="EC" id="2.3.1.31" evidence="1"/>
<dbReference type="EMBL" id="CP001358">
    <property type="protein sequence ID" value="ACL48984.1"/>
    <property type="molecule type" value="Genomic_DNA"/>
</dbReference>
<dbReference type="SMR" id="B8IZQ7"/>
<dbReference type="STRING" id="525146.Ddes_1078"/>
<dbReference type="KEGG" id="dds:Ddes_1078"/>
<dbReference type="eggNOG" id="COG1897">
    <property type="taxonomic scope" value="Bacteria"/>
</dbReference>
<dbReference type="HOGENOM" id="CLU_057851_0_1_7"/>
<dbReference type="UniPathway" id="UPA00051">
    <property type="reaction ID" value="UER00074"/>
</dbReference>
<dbReference type="GO" id="GO:0005737">
    <property type="term" value="C:cytoplasm"/>
    <property type="evidence" value="ECO:0007669"/>
    <property type="project" value="UniProtKB-SubCell"/>
</dbReference>
<dbReference type="GO" id="GO:0004414">
    <property type="term" value="F:homoserine O-acetyltransferase activity"/>
    <property type="evidence" value="ECO:0007669"/>
    <property type="project" value="UniProtKB-EC"/>
</dbReference>
<dbReference type="GO" id="GO:0008899">
    <property type="term" value="F:homoserine O-succinyltransferase activity"/>
    <property type="evidence" value="ECO:0007669"/>
    <property type="project" value="UniProtKB-UniRule"/>
</dbReference>
<dbReference type="GO" id="GO:0019281">
    <property type="term" value="P:L-methionine biosynthetic process from homoserine via O-succinyl-L-homoserine and cystathionine"/>
    <property type="evidence" value="ECO:0007669"/>
    <property type="project" value="InterPro"/>
</dbReference>
<dbReference type="CDD" id="cd03131">
    <property type="entry name" value="GATase1_HTS"/>
    <property type="match status" value="1"/>
</dbReference>
<dbReference type="FunFam" id="3.40.50.880:FF:000004">
    <property type="entry name" value="Homoserine O-succinyltransferase"/>
    <property type="match status" value="1"/>
</dbReference>
<dbReference type="Gene3D" id="3.40.50.880">
    <property type="match status" value="1"/>
</dbReference>
<dbReference type="HAMAP" id="MF_00295">
    <property type="entry name" value="MetA_acyltransf"/>
    <property type="match status" value="1"/>
</dbReference>
<dbReference type="InterPro" id="IPR029062">
    <property type="entry name" value="Class_I_gatase-like"/>
</dbReference>
<dbReference type="InterPro" id="IPR005697">
    <property type="entry name" value="HST_MetA"/>
</dbReference>
<dbReference type="InterPro" id="IPR033752">
    <property type="entry name" value="MetA_family"/>
</dbReference>
<dbReference type="NCBIfam" id="TIGR01001">
    <property type="entry name" value="metA"/>
    <property type="match status" value="1"/>
</dbReference>
<dbReference type="PANTHER" id="PTHR20919">
    <property type="entry name" value="HOMOSERINE O-SUCCINYLTRANSFERASE"/>
    <property type="match status" value="1"/>
</dbReference>
<dbReference type="PANTHER" id="PTHR20919:SF0">
    <property type="entry name" value="HOMOSERINE O-SUCCINYLTRANSFERASE"/>
    <property type="match status" value="1"/>
</dbReference>
<dbReference type="Pfam" id="PF04204">
    <property type="entry name" value="HTS"/>
    <property type="match status" value="1"/>
</dbReference>
<dbReference type="PIRSF" id="PIRSF000450">
    <property type="entry name" value="H_ser_succinyltr"/>
    <property type="match status" value="1"/>
</dbReference>
<dbReference type="SUPFAM" id="SSF52317">
    <property type="entry name" value="Class I glutamine amidotransferase-like"/>
    <property type="match status" value="1"/>
</dbReference>
<comment type="function">
    <text evidence="1">Transfers an acetyl group from acetyl-CoA to L-homoserine, forming acetyl-L-homoserine.</text>
</comment>
<comment type="catalytic activity">
    <reaction evidence="1">
        <text>L-homoserine + acetyl-CoA = O-acetyl-L-homoserine + CoA</text>
        <dbReference type="Rhea" id="RHEA:13701"/>
        <dbReference type="ChEBI" id="CHEBI:57287"/>
        <dbReference type="ChEBI" id="CHEBI:57288"/>
        <dbReference type="ChEBI" id="CHEBI:57476"/>
        <dbReference type="ChEBI" id="CHEBI:57716"/>
        <dbReference type="EC" id="2.3.1.31"/>
    </reaction>
</comment>
<comment type="pathway">
    <text evidence="1">Amino-acid biosynthesis; L-methionine biosynthesis via de novo pathway; O-acetyl-L-homoserine from L-homoserine: step 1/1.</text>
</comment>
<comment type="subcellular location">
    <subcellularLocation>
        <location evidence="1">Cytoplasm</location>
    </subcellularLocation>
</comment>
<comment type="similarity">
    <text evidence="1">Belongs to the MetA family.</text>
</comment>
<feature type="chain" id="PRO_1000191183" description="Homoserine O-acetyltransferase">
    <location>
        <begin position="1"/>
        <end position="314"/>
    </location>
</feature>
<feature type="active site" description="Acyl-thioester intermediate" evidence="1">
    <location>
        <position position="142"/>
    </location>
</feature>
<feature type="active site" description="Proton acceptor" evidence="1">
    <location>
        <position position="235"/>
    </location>
</feature>
<feature type="active site" evidence="1">
    <location>
        <position position="237"/>
    </location>
</feature>
<feature type="binding site" evidence="1">
    <location>
        <position position="163"/>
    </location>
    <ligand>
        <name>substrate</name>
    </ligand>
</feature>
<feature type="binding site" evidence="1">
    <location>
        <position position="192"/>
    </location>
    <ligand>
        <name>substrate</name>
    </ligand>
</feature>
<feature type="binding site" evidence="1">
    <location>
        <position position="249"/>
    </location>
    <ligand>
        <name>substrate</name>
    </ligand>
</feature>
<feature type="site" description="Important for acyl-CoA specificity" evidence="1">
    <location>
        <position position="111"/>
    </location>
</feature>
<feature type="site" description="Important for substrate specificity" evidence="1">
    <location>
        <position position="192"/>
    </location>
</feature>
<evidence type="ECO:0000255" key="1">
    <source>
        <dbReference type="HAMAP-Rule" id="MF_00295"/>
    </source>
</evidence>
<reference key="1">
    <citation type="submission" date="2009-01" db="EMBL/GenBank/DDBJ databases">
        <title>Complete sequence of Desulfovibrio desulfuricans subsp. desulfuricans str. ATCC 27774.</title>
        <authorList>
            <consortium name="US DOE Joint Genome Institute"/>
            <person name="Lucas S."/>
            <person name="Copeland A."/>
            <person name="Lapidus A."/>
            <person name="Glavina del Rio T."/>
            <person name="Tice H."/>
            <person name="Bruce D."/>
            <person name="Goodwin L."/>
            <person name="Pitluck S."/>
            <person name="Sims D."/>
            <person name="Lu M."/>
            <person name="Kiss H."/>
            <person name="Meineke L."/>
            <person name="Brettin T."/>
            <person name="Detter J.C."/>
            <person name="Han C."/>
            <person name="Larimer F."/>
            <person name="Land M."/>
            <person name="Hauser L."/>
            <person name="Kyrpides N."/>
            <person name="Ovchinnikova G."/>
            <person name="Hazen T.C."/>
        </authorList>
    </citation>
    <scope>NUCLEOTIDE SEQUENCE [LARGE SCALE GENOMIC DNA]</scope>
    <source>
        <strain>ATCC 27774 / DSM 6949 / MB</strain>
    </source>
</reference>
<protein>
    <recommendedName>
        <fullName evidence="1">Homoserine O-acetyltransferase</fullName>
        <shortName evidence="1">HAT</shortName>
        <ecNumber evidence="1">2.3.1.31</ecNumber>
    </recommendedName>
    <alternativeName>
        <fullName evidence="1">Homoserine transacetylase</fullName>
        <shortName evidence="1">HTA</shortName>
    </alternativeName>
</protein>
<sequence length="314" mass="36034">MPIKIPADLPACAALESENIFVMTEDRAVAQDIRPLEIVIVNLMPTKIATETQLLRLLGNSPLQVNITLLRTEAHESKNTPAQHLERFYKTFNEIRHGSFDGMIVTGAPVEHLPFEDVDYWHELLDIMNYAASHVYSTLYICWAAQAALYHFYGIPKFSLPQKISGIFNHDILLPDCRLFRGFDDTFTAPHSRNTEVRAGHILETPQLRLLAQSEQAGVTLVERVDHSQVFMTGHLEYDRGTLDAEYRRDVDRGLKPRVPEHYYPHDDPAAMPRMNWRAHAHLFYCNWLNYYVYQETPFSLTAIAQNREARAGA</sequence>
<name>METAA_DESDA</name>
<keyword id="KW-0012">Acyltransferase</keyword>
<keyword id="KW-0028">Amino-acid biosynthesis</keyword>
<keyword id="KW-0963">Cytoplasm</keyword>
<keyword id="KW-0486">Methionine biosynthesis</keyword>
<keyword id="KW-0808">Transferase</keyword>
<accession>B8IZQ7</accession>
<organism>
    <name type="scientific">Desulfovibrio desulfuricans (strain ATCC 27774 / DSM 6949 / MB)</name>
    <dbReference type="NCBI Taxonomy" id="525146"/>
    <lineage>
        <taxon>Bacteria</taxon>
        <taxon>Pseudomonadati</taxon>
        <taxon>Thermodesulfobacteriota</taxon>
        <taxon>Desulfovibrionia</taxon>
        <taxon>Desulfovibrionales</taxon>
        <taxon>Desulfovibrionaceae</taxon>
        <taxon>Desulfovibrio</taxon>
    </lineage>
</organism>
<proteinExistence type="inferred from homology"/>